<proteinExistence type="evidence at protein level"/>
<protein>
    <recommendedName>
        <fullName evidence="1">Acyl transferase</fullName>
        <shortName evidence="1">ACT</shortName>
        <ecNumber evidence="1">2.3.1.-</ecNumber>
    </recommendedName>
    <alternativeName>
        <fullName evidence="1">C14ACP-TE</fullName>
    </alternativeName>
    <alternativeName>
        <fullName evidence="1">Myristoyl-ACP-specific thioesterase</fullName>
    </alternativeName>
</protein>
<feature type="chain" id="PRO_0000220190" description="Acyl transferase">
    <location>
        <begin position="1"/>
        <end position="307"/>
    </location>
</feature>
<feature type="active site" description="Charge relay system" evidence="1">
    <location>
        <position position="116"/>
    </location>
</feature>
<feature type="active site" description="Charge relay system" evidence="1">
    <location>
        <position position="213"/>
    </location>
</feature>
<feature type="active site" description="Charge relay system" evidence="1">
    <location>
        <position position="243"/>
    </location>
</feature>
<feature type="mutagenesis site" description="Loss of activity." evidence="2">
    <original>S</original>
    <variation>T</variation>
    <variation>A</variation>
    <variation>G</variation>
    <location>
        <position position="79"/>
    </location>
</feature>
<feature type="sequence conflict" description="In Ref. 2; AAA27618." evidence="3" ref="2">
    <original>F</original>
    <variation>V</variation>
    <location>
        <position position="140"/>
    </location>
</feature>
<feature type="sequence conflict" description="In Ref. 2; AAA27618." evidence="3" ref="2">
    <original>N</original>
    <variation>D</variation>
    <location>
        <position position="165"/>
    </location>
</feature>
<name>LUXD1_PHOLU</name>
<reference key="1">
    <citation type="journal article" date="1990" name="Nucleic Acids Res.">
        <title>The nucleotide sequence of the luxD gene of Xenorhabdus luminescens Hm.</title>
        <authorList>
            <person name="Cochrum L."/>
            <person name="Hruska K.S."/>
            <person name="Rucker E.B."/>
            <person name="Johnston T.C."/>
        </authorList>
    </citation>
    <scope>NUCLEOTIDE SEQUENCE [GENOMIC DNA]</scope>
    <source>
        <strain>Hm</strain>
    </source>
</reference>
<reference key="2">
    <citation type="journal article" date="1992" name="J. Bacteriol.">
        <title>Multiple repetitive elements and organization of the lux operons of luminescent terrestrial bacteria.</title>
        <authorList>
            <person name="Meighen E.A."/>
            <person name="Szittner R.B."/>
        </authorList>
    </citation>
    <scope>NUCLEOTIDE SEQUENCE [GENOMIC DNA]</scope>
    <source>
        <strain>ATCC 29999 / DSM 3368 / BCRC 14801 / CCM 7077 / CIP 106429 / NCIMB 12670 / Hb</strain>
    </source>
</reference>
<reference key="3">
    <citation type="journal article" date="1990" name="J. Biol. Chem.">
        <title>Nucleotide sequence, expression, and properties of luciferase coded by lux genes from a terrestrial bacterium.</title>
        <authorList>
            <person name="Szittner R."/>
            <person name="Meighen E."/>
        </authorList>
    </citation>
    <scope>NUCLEOTIDE SEQUENCE [GENOMIC DNA] OF 232-307</scope>
    <source>
        <strain>ATCC 29999 / DSM 3368 / BCRC 14801 / CCM 7077 / CIP 106429 / NCIMB 12670 / Hb</strain>
    </source>
</reference>
<reference key="4">
    <citation type="journal article" date="1990" name="Biochem. Biophys. Res. Commun.">
        <title>The nucleotide sequence of the luxA and luxB genes of Xenorhabdus luminescens HM and a comparison of the amino acid sequences of luciferases from four species of bioluminescent bacteria.</title>
        <authorList>
            <person name="Johnston T.C."/>
            <person name="Rucker E.B."/>
            <person name="Cochrum L."/>
            <person name="Hruska K.S."/>
            <person name="Vandegrift V."/>
        </authorList>
    </citation>
    <scope>NUCLEOTIDE SEQUENCE [GENOMIC DNA] OF 262-307</scope>
</reference>
<reference key="5">
    <citation type="journal article" date="1991" name="J. Biol. Chem.">
        <title>A lux-specific myristoyl transferase in luminescent bacteria related to eukaryotic serine esterases.</title>
        <authorList>
            <person name="Ferri S.R."/>
            <person name="Meighen E.A."/>
        </authorList>
    </citation>
    <scope>MUTAGENESIS OF SER-79</scope>
</reference>
<organism>
    <name type="scientific">Photorhabdus luminescens</name>
    <name type="common">Xenorhabdus luminescens</name>
    <dbReference type="NCBI Taxonomy" id="29488"/>
    <lineage>
        <taxon>Bacteria</taxon>
        <taxon>Pseudomonadati</taxon>
        <taxon>Pseudomonadota</taxon>
        <taxon>Gammaproteobacteria</taxon>
        <taxon>Enterobacterales</taxon>
        <taxon>Morganellaceae</taxon>
        <taxon>Photorhabdus</taxon>
    </lineage>
</organism>
<gene>
    <name evidence="1" type="primary">luxD</name>
</gene>
<sequence>MENESKYKTIDHVICVEGNKKIHVWETLPEENSPKRKNAIIIASGFARRMDHFAGLAEYLSRNGFHVIRYDSLHHVGLSSGTIDEFTMSIGKQSLLAVVDWLTTRKINNFGMLASSLSARIAYASLSEINASFLITAVGFVNLRYSLERALGFDYLSLPINELPNNLDFEGHKLGAEVFARDCLDFGWEDLASTINNMMYLDIPFIAFTANNDNWVKQDEVITLLSNIRSNRCKIYSLLGSSHDLSENLVVLRNFYQSVTKAAIAMDNDHLDIDVDITEPSFEHLTIATVNERRMRIEIENQAISLS</sequence>
<evidence type="ECO:0000255" key="1">
    <source>
        <dbReference type="HAMAP-Rule" id="MF_00774"/>
    </source>
</evidence>
<evidence type="ECO:0000269" key="2">
    <source>
    </source>
</evidence>
<evidence type="ECO:0000305" key="3"/>
<keyword id="KW-0012">Acyltransferase</keyword>
<keyword id="KW-0455">Luminescence</keyword>
<keyword id="KW-0808">Transferase</keyword>
<comment type="function">
    <text>Acyl transferase is part of the fatty acid reductase system required for aldehyde biosynthesis; it produces fatty acids for the luminescent reaction.</text>
</comment>
<comment type="pathway">
    <text evidence="1">Lipid metabolism; fatty acid reduction for biolumincescence.</text>
</comment>
<comment type="similarity">
    <text evidence="1">Belongs to the LuxD family.</text>
</comment>
<dbReference type="EC" id="2.3.1.-" evidence="1"/>
<dbReference type="EMBL" id="X53783">
    <property type="protein sequence ID" value="CAA37799.1"/>
    <property type="molecule type" value="Genomic_DNA"/>
</dbReference>
<dbReference type="EMBL" id="M90093">
    <property type="protein sequence ID" value="AAA27618.1"/>
    <property type="molecule type" value="Genomic_DNA"/>
</dbReference>
<dbReference type="EMBL" id="M57416">
    <property type="protein sequence ID" value="AAA27622.1"/>
    <property type="molecule type" value="Genomic_DNA"/>
</dbReference>
<dbReference type="EMBL" id="M55977">
    <property type="protein sequence ID" value="AAA27625.1"/>
    <property type="molecule type" value="Genomic_DNA"/>
</dbReference>
<dbReference type="PIR" id="S11686">
    <property type="entry name" value="S11686"/>
</dbReference>
<dbReference type="SMR" id="P19197"/>
<dbReference type="STRING" id="29488.KS18_21615"/>
<dbReference type="ESTHER" id="pholu-lxd1">
    <property type="family name" value="Thioesterase_acyl-transferase"/>
</dbReference>
<dbReference type="UniPathway" id="UPA00569"/>
<dbReference type="GO" id="GO:0016747">
    <property type="term" value="F:acyltransferase activity, transferring groups other than amino-acyl groups"/>
    <property type="evidence" value="ECO:0007669"/>
    <property type="project" value="UniProtKB-UniRule"/>
</dbReference>
<dbReference type="GO" id="GO:0008218">
    <property type="term" value="P:bioluminescence"/>
    <property type="evidence" value="ECO:0007669"/>
    <property type="project" value="UniProtKB-UniRule"/>
</dbReference>
<dbReference type="GO" id="GO:0006631">
    <property type="term" value="P:fatty acid metabolic process"/>
    <property type="evidence" value="ECO:0007669"/>
    <property type="project" value="InterPro"/>
</dbReference>
<dbReference type="Gene3D" id="3.40.50.1820">
    <property type="entry name" value="alpha/beta hydrolase"/>
    <property type="match status" value="1"/>
</dbReference>
<dbReference type="HAMAP" id="MF_00774">
    <property type="entry name" value="LuxD"/>
    <property type="match status" value="1"/>
</dbReference>
<dbReference type="InterPro" id="IPR029058">
    <property type="entry name" value="AB_hydrolase_fold"/>
</dbReference>
<dbReference type="InterPro" id="IPR003157">
    <property type="entry name" value="LuxD"/>
</dbReference>
<dbReference type="NCBIfam" id="NF010127">
    <property type="entry name" value="PRK13604.1"/>
    <property type="match status" value="1"/>
</dbReference>
<dbReference type="Pfam" id="PF02273">
    <property type="entry name" value="Acyl_transf_2"/>
    <property type="match status" value="1"/>
</dbReference>
<dbReference type="PIRSF" id="PIRSF009416">
    <property type="entry name" value="LuxD"/>
    <property type="match status" value="1"/>
</dbReference>
<dbReference type="SUPFAM" id="SSF53474">
    <property type="entry name" value="alpha/beta-Hydrolases"/>
    <property type="match status" value="1"/>
</dbReference>
<accession>P19197</accession>
<accession>Q48732</accession>
<accession>Q56818</accession>